<evidence type="ECO:0000250" key="1"/>
<evidence type="ECO:0000305" key="2"/>
<comment type="function">
    <text>Destroys superoxide anion radicals which are normally produced within the cells and which are toxic to biological systems.</text>
</comment>
<comment type="catalytic activity">
    <reaction>
        <text>2 superoxide + 2 H(+) = H2O2 + O2</text>
        <dbReference type="Rhea" id="RHEA:20696"/>
        <dbReference type="ChEBI" id="CHEBI:15378"/>
        <dbReference type="ChEBI" id="CHEBI:15379"/>
        <dbReference type="ChEBI" id="CHEBI:16240"/>
        <dbReference type="ChEBI" id="CHEBI:18421"/>
        <dbReference type="EC" id="1.15.1.1"/>
    </reaction>
</comment>
<comment type="cofactor">
    <cofactor evidence="1">
        <name>Mn(2+)</name>
        <dbReference type="ChEBI" id="CHEBI:29035"/>
    </cofactor>
    <text evidence="1">Binds 1 Mn(2+) ion per subunit.</text>
</comment>
<comment type="subunit">
    <text evidence="1">Homodimer.</text>
</comment>
<comment type="subcellular location">
    <subcellularLocation>
        <location evidence="1">Secreted</location>
    </subcellularLocation>
</comment>
<comment type="similarity">
    <text evidence="2">Belongs to the iron/manganese superoxide dismutase family.</text>
</comment>
<comment type="caution">
    <text evidence="2">Although found extracellularly, no signal sequence is present. An alternative secretory pathway may be used.</text>
</comment>
<dbReference type="EC" id="1.15.1.1"/>
<dbReference type="EMBL" id="CP000003">
    <property type="protein sequence ID" value="AAT87255.1"/>
    <property type="molecule type" value="Genomic_DNA"/>
</dbReference>
<dbReference type="RefSeq" id="WP_011184668.1">
    <property type="nucleotide sequence ID" value="NC_006086.1"/>
</dbReference>
<dbReference type="SMR" id="Q5XBF8"/>
<dbReference type="KEGG" id="spa:M6_Spy1120"/>
<dbReference type="HOGENOM" id="CLU_031625_0_1_9"/>
<dbReference type="Proteomes" id="UP000001167">
    <property type="component" value="Chromosome"/>
</dbReference>
<dbReference type="GO" id="GO:0005737">
    <property type="term" value="C:cytoplasm"/>
    <property type="evidence" value="ECO:0007669"/>
    <property type="project" value="TreeGrafter"/>
</dbReference>
<dbReference type="GO" id="GO:0005576">
    <property type="term" value="C:extracellular region"/>
    <property type="evidence" value="ECO:0007669"/>
    <property type="project" value="UniProtKB-SubCell"/>
</dbReference>
<dbReference type="GO" id="GO:0046872">
    <property type="term" value="F:metal ion binding"/>
    <property type="evidence" value="ECO:0007669"/>
    <property type="project" value="UniProtKB-KW"/>
</dbReference>
<dbReference type="GO" id="GO:0004784">
    <property type="term" value="F:superoxide dismutase activity"/>
    <property type="evidence" value="ECO:0007669"/>
    <property type="project" value="UniProtKB-EC"/>
</dbReference>
<dbReference type="FunFam" id="1.10.287.990:FF:000001">
    <property type="entry name" value="Superoxide dismutase"/>
    <property type="match status" value="1"/>
</dbReference>
<dbReference type="FunFam" id="3.55.40.20:FF:000001">
    <property type="entry name" value="Superoxide dismutase"/>
    <property type="match status" value="1"/>
</dbReference>
<dbReference type="Gene3D" id="1.10.287.990">
    <property type="entry name" value="Fe,Mn superoxide dismutase (SOD) domain"/>
    <property type="match status" value="1"/>
</dbReference>
<dbReference type="Gene3D" id="3.55.40.20">
    <property type="entry name" value="Iron/manganese superoxide dismutase, C-terminal domain"/>
    <property type="match status" value="1"/>
</dbReference>
<dbReference type="InterPro" id="IPR001189">
    <property type="entry name" value="Mn/Fe_SOD"/>
</dbReference>
<dbReference type="InterPro" id="IPR019833">
    <property type="entry name" value="Mn/Fe_SOD_BS"/>
</dbReference>
<dbReference type="InterPro" id="IPR019832">
    <property type="entry name" value="Mn/Fe_SOD_C"/>
</dbReference>
<dbReference type="InterPro" id="IPR019831">
    <property type="entry name" value="Mn/Fe_SOD_N"/>
</dbReference>
<dbReference type="InterPro" id="IPR036324">
    <property type="entry name" value="Mn/Fe_SOD_N_sf"/>
</dbReference>
<dbReference type="InterPro" id="IPR036314">
    <property type="entry name" value="SOD_C_sf"/>
</dbReference>
<dbReference type="PANTHER" id="PTHR43595">
    <property type="entry name" value="37S RIBOSOMAL PROTEIN S26, MITOCHONDRIAL"/>
    <property type="match status" value="1"/>
</dbReference>
<dbReference type="PANTHER" id="PTHR43595:SF2">
    <property type="entry name" value="SMALL RIBOSOMAL SUBUNIT PROTEIN MS42"/>
    <property type="match status" value="1"/>
</dbReference>
<dbReference type="Pfam" id="PF02777">
    <property type="entry name" value="Sod_Fe_C"/>
    <property type="match status" value="1"/>
</dbReference>
<dbReference type="Pfam" id="PF00081">
    <property type="entry name" value="Sod_Fe_N"/>
    <property type="match status" value="1"/>
</dbReference>
<dbReference type="PIRSF" id="PIRSF000349">
    <property type="entry name" value="SODismutase"/>
    <property type="match status" value="1"/>
</dbReference>
<dbReference type="PRINTS" id="PR01703">
    <property type="entry name" value="MNSODISMTASE"/>
</dbReference>
<dbReference type="SUPFAM" id="SSF54719">
    <property type="entry name" value="Fe,Mn superoxide dismutase (SOD), C-terminal domain"/>
    <property type="match status" value="1"/>
</dbReference>
<dbReference type="SUPFAM" id="SSF46609">
    <property type="entry name" value="Fe,Mn superoxide dismutase (SOD), N-terminal domain"/>
    <property type="match status" value="1"/>
</dbReference>
<dbReference type="PROSITE" id="PS00088">
    <property type="entry name" value="SOD_MN"/>
    <property type="match status" value="1"/>
</dbReference>
<sequence length="201" mass="22651">MAIILPELPYAYDALEPQFDAETMTLHHDKHHATYVANANAALEKHPEIGENLEELLADVTKIPEDIRQALINNGGGHLNHALFWELLSPEKQDITPDVAQAIDDAFGSFDAFKEQFTAAATGRFGSGWAWLVVNKEGQLEITSTANQDTPISEGKKPILALDVWEHAYYLNYRNVRPNYIKAFFEIINWKKVSELYQAAK</sequence>
<feature type="initiator methionine" description="Removed" evidence="1">
    <location>
        <position position="1"/>
    </location>
</feature>
<feature type="chain" id="PRO_0000160103" description="Superoxide dismutase [Mn]">
    <location>
        <begin position="2"/>
        <end position="201"/>
    </location>
</feature>
<feature type="binding site" evidence="1">
    <location>
        <position position="27"/>
    </location>
    <ligand>
        <name>Mn(2+)</name>
        <dbReference type="ChEBI" id="CHEBI:29035"/>
    </ligand>
</feature>
<feature type="binding site" evidence="1">
    <location>
        <position position="81"/>
    </location>
    <ligand>
        <name>Mn(2+)</name>
        <dbReference type="ChEBI" id="CHEBI:29035"/>
    </ligand>
</feature>
<feature type="binding site" evidence="1">
    <location>
        <position position="163"/>
    </location>
    <ligand>
        <name>Mn(2+)</name>
        <dbReference type="ChEBI" id="CHEBI:29035"/>
    </ligand>
</feature>
<feature type="binding site" evidence="1">
    <location>
        <position position="167"/>
    </location>
    <ligand>
        <name>Mn(2+)</name>
        <dbReference type="ChEBI" id="CHEBI:29035"/>
    </ligand>
</feature>
<proteinExistence type="inferred from homology"/>
<gene>
    <name type="primary">sodA</name>
    <name type="ordered locus">M6_Spy1120</name>
</gene>
<keyword id="KW-0464">Manganese</keyword>
<keyword id="KW-0479">Metal-binding</keyword>
<keyword id="KW-0560">Oxidoreductase</keyword>
<keyword id="KW-0964">Secreted</keyword>
<protein>
    <recommendedName>
        <fullName>Superoxide dismutase [Mn]</fullName>
        <ecNumber>1.15.1.1</ecNumber>
    </recommendedName>
</protein>
<reference key="1">
    <citation type="journal article" date="2004" name="J. Infect. Dis.">
        <title>Progress toward characterization of the group A Streptococcus metagenome: complete genome sequence of a macrolide-resistant serotype M6 strain.</title>
        <authorList>
            <person name="Banks D.J."/>
            <person name="Porcella S.F."/>
            <person name="Barbian K.D."/>
            <person name="Beres S.B."/>
            <person name="Philips L.E."/>
            <person name="Voyich J.M."/>
            <person name="DeLeo F.R."/>
            <person name="Martin J.M."/>
            <person name="Somerville G.A."/>
            <person name="Musser J.M."/>
        </authorList>
    </citation>
    <scope>NUCLEOTIDE SEQUENCE [LARGE SCALE GENOMIC DNA]</scope>
    <source>
        <strain>ATCC BAA-946 / MGAS10394</strain>
    </source>
</reference>
<name>SODM_STRP6</name>
<organism>
    <name type="scientific">Streptococcus pyogenes serotype M6 (strain ATCC BAA-946 / MGAS10394)</name>
    <dbReference type="NCBI Taxonomy" id="286636"/>
    <lineage>
        <taxon>Bacteria</taxon>
        <taxon>Bacillati</taxon>
        <taxon>Bacillota</taxon>
        <taxon>Bacilli</taxon>
        <taxon>Lactobacillales</taxon>
        <taxon>Streptococcaceae</taxon>
        <taxon>Streptococcus</taxon>
    </lineage>
</organism>
<accession>Q5XBF8</accession>